<accession>P67158</accession>
<accession>A0A1R3XY99</accession>
<accession>O53433</accession>
<accession>X2BH03</accession>
<dbReference type="EMBL" id="LT708304">
    <property type="protein sequence ID" value="SIT99713.1"/>
    <property type="molecule type" value="Genomic_DNA"/>
</dbReference>
<dbReference type="RefSeq" id="NP_854769.1">
    <property type="nucleotide sequence ID" value="NC_002945.3"/>
</dbReference>
<dbReference type="SMR" id="P67158"/>
<dbReference type="KEGG" id="mbo:BQ2027_MB1114C"/>
<dbReference type="PATRIC" id="fig|233413.5.peg.1216"/>
<dbReference type="Proteomes" id="UP000001419">
    <property type="component" value="Chromosome"/>
</dbReference>
<dbReference type="GO" id="GO:0005886">
    <property type="term" value="C:plasma membrane"/>
    <property type="evidence" value="ECO:0007669"/>
    <property type="project" value="UniProtKB-SubCell"/>
</dbReference>
<dbReference type="GO" id="GO:0140911">
    <property type="term" value="F:pore-forming activity"/>
    <property type="evidence" value="ECO:0007669"/>
    <property type="project" value="InterPro"/>
</dbReference>
<dbReference type="InterPro" id="IPR004254">
    <property type="entry name" value="AdipoR/HlyIII-related"/>
</dbReference>
<dbReference type="InterPro" id="IPR005744">
    <property type="entry name" value="Hy-lIII"/>
</dbReference>
<dbReference type="NCBIfam" id="TIGR01065">
    <property type="entry name" value="hlyIII"/>
    <property type="match status" value="1"/>
</dbReference>
<dbReference type="PANTHER" id="PTHR20855">
    <property type="entry name" value="ADIPOR/PROGESTIN RECEPTOR-RELATED"/>
    <property type="match status" value="1"/>
</dbReference>
<dbReference type="PANTHER" id="PTHR20855:SF3">
    <property type="entry name" value="LD03007P"/>
    <property type="match status" value="1"/>
</dbReference>
<dbReference type="Pfam" id="PF03006">
    <property type="entry name" value="HlyIII"/>
    <property type="match status" value="1"/>
</dbReference>
<keyword id="KW-1003">Cell membrane</keyword>
<keyword id="KW-0472">Membrane</keyword>
<keyword id="KW-1185">Reference proteome</keyword>
<keyword id="KW-0812">Transmembrane</keyword>
<keyword id="KW-1133">Transmembrane helix</keyword>
<feature type="chain" id="PRO_0000176903" description="UPF0073 membrane protein Mb1114c">
    <location>
        <begin position="1"/>
        <end position="242"/>
    </location>
</feature>
<feature type="transmembrane region" description="Helical" evidence="1">
    <location>
        <begin position="42"/>
        <end position="62"/>
    </location>
</feature>
<feature type="transmembrane region" description="Helical" evidence="1">
    <location>
        <begin position="67"/>
        <end position="87"/>
    </location>
</feature>
<feature type="transmembrane region" description="Helical" evidence="1">
    <location>
        <begin position="108"/>
        <end position="128"/>
    </location>
</feature>
<feature type="transmembrane region" description="Helical" evidence="1">
    <location>
        <begin position="133"/>
        <end position="153"/>
    </location>
</feature>
<feature type="transmembrane region" description="Helical" evidence="1">
    <location>
        <begin position="159"/>
        <end position="179"/>
    </location>
</feature>
<feature type="transmembrane region" description="Helical" evidence="1">
    <location>
        <begin position="186"/>
        <end position="206"/>
    </location>
</feature>
<feature type="transmembrane region" description="Helical" evidence="1">
    <location>
        <begin position="222"/>
        <end position="242"/>
    </location>
</feature>
<comment type="subcellular location">
    <subcellularLocation>
        <location evidence="2">Cell membrane</location>
        <topology evidence="2">Multi-pass membrane protein</topology>
    </subcellularLocation>
</comment>
<comment type="similarity">
    <text evidence="2">Belongs to the UPF0073 (Hly-III) family.</text>
</comment>
<reference key="1">
    <citation type="journal article" date="2003" name="Proc. Natl. Acad. Sci. U.S.A.">
        <title>The complete genome sequence of Mycobacterium bovis.</title>
        <authorList>
            <person name="Garnier T."/>
            <person name="Eiglmeier K."/>
            <person name="Camus J.-C."/>
            <person name="Medina N."/>
            <person name="Mansoor H."/>
            <person name="Pryor M."/>
            <person name="Duthoy S."/>
            <person name="Grondin S."/>
            <person name="Lacroix C."/>
            <person name="Monsempe C."/>
            <person name="Simon S."/>
            <person name="Harris B."/>
            <person name="Atkin R."/>
            <person name="Doggett J."/>
            <person name="Mayes R."/>
            <person name="Keating L."/>
            <person name="Wheeler P.R."/>
            <person name="Parkhill J."/>
            <person name="Barrell B.G."/>
            <person name="Cole S.T."/>
            <person name="Gordon S.V."/>
            <person name="Hewinson R.G."/>
        </authorList>
    </citation>
    <scope>NUCLEOTIDE SEQUENCE [LARGE SCALE GENOMIC DNA]</scope>
    <source>
        <strain>ATCC BAA-935 / AF2122/97</strain>
    </source>
</reference>
<reference key="2">
    <citation type="journal article" date="2017" name="Genome Announc.">
        <title>Updated reference genome sequence and annotation of Mycobacterium bovis AF2122/97.</title>
        <authorList>
            <person name="Malone K.M."/>
            <person name="Farrell D."/>
            <person name="Stuber T.P."/>
            <person name="Schubert O.T."/>
            <person name="Aebersold R."/>
            <person name="Robbe-Austerman S."/>
            <person name="Gordon S.V."/>
        </authorList>
    </citation>
    <scope>NUCLEOTIDE SEQUENCE [LARGE SCALE GENOMIC DNA]</scope>
    <scope>GENOME REANNOTATION</scope>
    <source>
        <strain>ATCC BAA-935 / AF2122/97</strain>
    </source>
</reference>
<gene>
    <name type="ordered locus">BQ2027_MB1114C</name>
</gene>
<proteinExistence type="inferred from homology"/>
<protein>
    <recommendedName>
        <fullName>UPF0073 membrane protein Mb1114c</fullName>
    </recommendedName>
</protein>
<organism>
    <name type="scientific">Mycobacterium bovis (strain ATCC BAA-935 / AF2122/97)</name>
    <dbReference type="NCBI Taxonomy" id="233413"/>
    <lineage>
        <taxon>Bacteria</taxon>
        <taxon>Bacillati</taxon>
        <taxon>Actinomycetota</taxon>
        <taxon>Actinomycetes</taxon>
        <taxon>Mycobacteriales</taxon>
        <taxon>Mycobacteriaceae</taxon>
        <taxon>Mycobacterium</taxon>
        <taxon>Mycobacterium tuberculosis complex</taxon>
    </lineage>
</organism>
<evidence type="ECO:0000255" key="1"/>
<evidence type="ECO:0000305" key="2"/>
<name>Y1114_MYCBO</name>
<sequence length="242" mass="26034">MSGQADTATTAEARTPAHAAHHLVEGVARVLTKPRFRGWIHVYSAGTAVLAGASLVAVSWAVGSAKAGLTTLAYTAATITMFTVSATYHRVNWKSATARNWMKRADHSMIFVFIAGSYTPFALLALPAHDGRVVLSIVWGGAIAGILLKMCWPAAPRSVGVPLYLLLGWVAVWYTATILHNAGVTALVLLFVGGALYSIGGILYAVRWPDPWPTTFGYHEFFHACTAVAAICHYIAMWFVVF</sequence>